<organism>
    <name type="scientific">Corynebacterium sp. (strain U-96)</name>
    <dbReference type="NCBI Taxonomy" id="31944"/>
    <lineage>
        <taxon>Bacteria</taxon>
        <taxon>Bacillati</taxon>
        <taxon>Actinomycetota</taxon>
        <taxon>Actinomycetes</taxon>
        <taxon>Mycobacteriales</taxon>
        <taxon>Corynebacteriaceae</taxon>
        <taxon>Corynebacterium</taxon>
    </lineage>
</organism>
<sequence length="99" mass="11429">MMLIECPNCGPRNENEFKYGGEAHVAYPEDPNALSDKEWSRYLFYRGNKKGIFAERWVHSGGCRKWFNALRDTVSYEFKAVYRAGEARPQLDSTEGGTR</sequence>
<protein>
    <recommendedName>
        <fullName evidence="7">Sarcosine oxidase subunit delta</fullName>
        <shortName evidence="7">Sarcosine oxidase subunit D</shortName>
        <ecNumber evidence="4 8">1.5.3.24</ecNumber>
    </recommendedName>
    <alternativeName>
        <fullName evidence="7">Sarcosine oxidase (5,10-methylenetetrahydrofolate-forming) subunit delta</fullName>
    </alternativeName>
    <alternativeName>
        <fullName evidence="7">Tetrameric sarcosine oxidase subunit delta</fullName>
        <shortName evidence="7">TSOX subunit delta</shortName>
    </alternativeName>
</protein>
<reference key="1">
    <citation type="journal article" date="2005" name="Biosci. Biotechnol. Biochem.">
        <title>Corynebacterium sp. U-96 contains a cluster of genes of enzymes for the catabolism of sarcosine to pyruvate.</title>
        <authorList>
            <person name="Suzuki H."/>
            <person name="Tamamura R."/>
            <person name="Yajima S."/>
            <person name="Kanno M."/>
            <person name="Suguro M."/>
        </authorList>
    </citation>
    <scope>NUCLEOTIDE SEQUENCE [GENOMIC DNA]</scope>
    <scope>SUBUNIT</scope>
    <source>
        <strain>U-96</strain>
    </source>
</reference>
<reference key="2">
    <citation type="journal article" date="1981" name="J. Biochem.">
        <title>Purification and some properties of sarcosine oxidase from Corynebacterium sp. U-96.</title>
        <authorList>
            <person name="Suzuki M."/>
        </authorList>
    </citation>
    <scope>FUNCTION</scope>
    <scope>CATALYTIC ACTIVITY</scope>
    <scope>ACTIVITY REGULATION</scope>
    <scope>BIOPHYSICOCHEMICAL PROPERTIES</scope>
    <scope>SUBUNIT</scope>
    <source>
        <strain>U-96</strain>
    </source>
</reference>
<reference key="3">
    <citation type="journal article" date="2007" name="J. Biochem.">
        <title>Kinetic studies on the role of Lys-171 and Lys-358 in the beta subunit of sarcosine oxidase from Corynebacterium sp. U-96.</title>
        <authorList>
            <person name="Saito M."/>
            <person name="Kanno M."/>
            <person name="Iizuka H."/>
            <person name="Suzuki H."/>
        </authorList>
    </citation>
    <scope>FUNCTION</scope>
    <scope>CATALYTIC ACTIVITY</scope>
    <scope>BIOPHYSICOCHEMICAL PROPERTIES</scope>
    <source>
        <strain>U-96</strain>
    </source>
</reference>
<reference evidence="9 10" key="4">
    <citation type="journal article" date="2005" name="Biochem. Biophys. Res. Commun.">
        <title>Crystal structure of heterotetrameric sarcosine oxidase from Corynebacterium sp. U-96.</title>
        <authorList>
            <person name="Ida K."/>
            <person name="Moriguchi T."/>
            <person name="Suzuki H."/>
        </authorList>
    </citation>
    <scope>X-RAY CRYSTALLOGRAPHY (2.15 ANGSTROMS) IN COMPLEX WITH ZINC</scope>
    <scope>SUBUNIT</scope>
    <source>
        <strain>U-96</strain>
    </source>
</reference>
<reference evidence="11 12 13 14" key="5">
    <citation type="journal article" date="2010" name="J. Biochem.">
        <title>Channeling and conformational changes in the heterotetrameric sarcosine oxidase from Corynebacterium sp. U-96.</title>
        <authorList>
            <person name="Moriguchi T."/>
            <person name="Ida K."/>
            <person name="Hikima T."/>
            <person name="Ueno G."/>
            <person name="Yamamoto M."/>
            <person name="Suzuki H."/>
        </authorList>
    </citation>
    <scope>X-RAY CRYSTALLOGRAPHY (2.20 ANGSTROMS) IN COMPLEXES WITH ZINC</scope>
    <scope>FUNCTION</scope>
    <scope>CATALYTIC ACTIVITY</scope>
    <scope>REACTION MECHANISM</scope>
    <scope>BIOPHYSICOCHEMICAL PROPERTIES</scope>
    <scope>SUBUNIT</scope>
    <source>
        <strain>U-96</strain>
    </source>
</reference>
<keyword id="KW-0002">3D-structure</keyword>
<keyword id="KW-0963">Cytoplasm</keyword>
<keyword id="KW-0479">Metal-binding</keyword>
<keyword id="KW-0560">Oxidoreductase</keyword>
<keyword id="KW-0862">Zinc</keyword>
<proteinExistence type="evidence at protein level"/>
<accession>Q50LF1</accession>
<comment type="function">
    <text evidence="3 4 5 8">In the presence of tetrahydrofolate, catalyzes the oxidative demethylation of sarcosine to yield glycine, 5,10-methylenetetrahydrofolate and hydrogen peroxide (PubMed:20675294). In the absence of tetrahydrofolate, catalyzes the oxidative demethylation of sarcosine to yield glycine, formaldehyde and hydrogen peroxide (PubMed:17395614, PubMed:20675294, PubMed:7240129). Can also use N-methyl-L-alanine and N-ethyl-L-glycine (PubMed:7240129). Is very specific for oxygen as an acceptor (PubMed:7240129).</text>
</comment>
<comment type="catalytic activity">
    <reaction evidence="4 8">
        <text>sarcosine + (6S)-5,6,7,8-tetrahydrofolate + O2 = (6R)-5,10-methylene-5,6,7,8-tetrahydrofolate + glycine + H2O2</text>
        <dbReference type="Rhea" id="RHEA:70455"/>
        <dbReference type="ChEBI" id="CHEBI:15379"/>
        <dbReference type="ChEBI" id="CHEBI:15636"/>
        <dbReference type="ChEBI" id="CHEBI:16240"/>
        <dbReference type="ChEBI" id="CHEBI:57305"/>
        <dbReference type="ChEBI" id="CHEBI:57433"/>
        <dbReference type="ChEBI" id="CHEBI:57453"/>
        <dbReference type="EC" id="1.5.3.24"/>
    </reaction>
</comment>
<comment type="catalytic activity">
    <reaction evidence="3 4 5">
        <text>sarcosine + O2 + H2O = formaldehyde + glycine + H2O2</text>
        <dbReference type="Rhea" id="RHEA:13313"/>
        <dbReference type="ChEBI" id="CHEBI:15377"/>
        <dbReference type="ChEBI" id="CHEBI:15379"/>
        <dbReference type="ChEBI" id="CHEBI:16240"/>
        <dbReference type="ChEBI" id="CHEBI:16842"/>
        <dbReference type="ChEBI" id="CHEBI:57305"/>
        <dbReference type="ChEBI" id="CHEBI:57433"/>
    </reaction>
</comment>
<comment type="activity regulation">
    <text evidence="5">Inhibited by Zn(2+), Cu(2+), Cd(2+), Hg(2+), Ag(+), p-chloromercuribenzoate (p-CMB), iodoacetamide, N-ethylmaleimide, CN(-), o-phenanthroline and sodium lauryl sulfate.</text>
</comment>
<comment type="biophysicochemical properties">
    <kinetics>
        <KM evidence="5">3.4 mM for sarcosine (at pH 8.3)</KM>
        <KM evidence="5">3.8 mM for sarcosine (at pH 7.0)</KM>
        <KM evidence="3">2.8 mM for sarcosine (at pH 8.0 and 25 degrees Celsius)</KM>
        <KM evidence="4">1.4 mM for sarcosine (at pH 8.0 and 25 degrees Celsius)</KM>
        <KM evidence="5">8.7 mM for N-methyl-L-alanine (at pH 8.3)</KM>
        <KM evidence="5">12.4 mM for N-methyl-L-alanine (at pH 7.0)</KM>
        <KM evidence="5">11.4 mM for N-ethyl-L-glycine (at pH 7.0)</KM>
        <KM evidence="5">0.13 mM for oxygen</KM>
        <KM evidence="3">17.6 uM for oxygen (at pH 8.0 and 25 degrees Celsius)</KM>
        <Vmax evidence="5">12.81 umol/min/mg enzyme toward oxygen</Vmax>
        <text evidence="4 5">kcat is 5.8 sec(-1) with sarcosine as substrate (at pH 8.3). kcat is 3.0 sec(-1) with sarcosine as substrate (at pH 7.0). kcat is 2.1 sec(-1) with N-methyl-L-alanine as substrate (at pH 8.3). kcat is 1.8 sec(-1) with N-methyl-L-alanine as substrate (at pH 7.0). kcat is 2.2 sec(-1) with N-ethyl-L-glycine as substrate (at pH 7.0) (PubMed:7240129). kcat is 17.5 sec(-1) with sarcosine as substrate (at pH 8.0 and 25 degrees Celsius, in the absence of tetrahydrofolate) (PubMed:20675294).</text>
    </kinetics>
    <phDependence>
        <text evidence="5">Optimum pH is 7.7 in potassium phosphate buffer and 8.0-8.5 in glycylglycine buffer.</text>
    </phDependence>
    <temperatureDependence>
        <text evidence="5">Optimum temperature is 37 degrees Celsius.</text>
    </temperatureDependence>
</comment>
<comment type="subunit">
    <text evidence="1 2 4 5">Heterotetramer composed of subunits alpha (SoxA), beta (SoxB), gamma (SoxG) and delta (SoxD).</text>
</comment>
<comment type="subcellular location">
    <subcellularLocation>
        <location evidence="7">Cytoplasm</location>
    </subcellularLocation>
</comment>
<comment type="similarity">
    <text evidence="7">Belongs to the SoxD family.</text>
</comment>
<feature type="chain" id="PRO_0000459103" description="Sarcosine oxidase subunit delta">
    <location>
        <begin position="1"/>
        <end position="99"/>
    </location>
</feature>
<feature type="binding site" evidence="2 4 9 10 11 12 13 14">
    <location>
        <position position="6"/>
    </location>
    <ligand>
        <name>Zn(2+)</name>
        <dbReference type="ChEBI" id="CHEBI:29105"/>
    </ligand>
</feature>
<feature type="binding site" evidence="2 4 9 10 11 12 13 14">
    <location>
        <position position="9"/>
    </location>
    <ligand>
        <name>Zn(2+)</name>
        <dbReference type="ChEBI" id="CHEBI:29105"/>
    </ligand>
</feature>
<feature type="binding site" evidence="2 4 9 10 11 12 13 14">
    <location>
        <position position="59"/>
    </location>
    <ligand>
        <name>Zn(2+)</name>
        <dbReference type="ChEBI" id="CHEBI:29105"/>
    </ligand>
</feature>
<feature type="binding site" evidence="2 4 9 10 11 12 13 14">
    <location>
        <position position="63"/>
    </location>
    <ligand>
        <name>Zn(2+)</name>
        <dbReference type="ChEBI" id="CHEBI:29105"/>
    </ligand>
</feature>
<feature type="strand" evidence="15">
    <location>
        <begin position="3"/>
        <end position="6"/>
    </location>
</feature>
<feature type="turn" evidence="15">
    <location>
        <begin position="7"/>
        <end position="9"/>
    </location>
</feature>
<feature type="strand" evidence="15">
    <location>
        <begin position="10"/>
        <end position="13"/>
    </location>
</feature>
<feature type="helix" evidence="15">
    <location>
        <begin position="14"/>
        <end position="16"/>
    </location>
</feature>
<feature type="strand" evidence="15">
    <location>
        <begin position="18"/>
        <end position="24"/>
    </location>
</feature>
<feature type="helix" evidence="15">
    <location>
        <begin position="31"/>
        <end position="33"/>
    </location>
</feature>
<feature type="helix" evidence="15">
    <location>
        <begin position="36"/>
        <end position="44"/>
    </location>
</feature>
<feature type="strand" evidence="15">
    <location>
        <begin position="50"/>
        <end position="58"/>
    </location>
</feature>
<feature type="turn" evidence="15">
    <location>
        <begin position="60"/>
        <end position="63"/>
    </location>
</feature>
<feature type="strand" evidence="15">
    <location>
        <begin position="66"/>
        <end position="72"/>
    </location>
</feature>
<feature type="turn" evidence="15">
    <location>
        <begin position="73"/>
        <end position="75"/>
    </location>
</feature>
<feature type="strand" evidence="15">
    <location>
        <begin position="78"/>
        <end position="83"/>
    </location>
</feature>
<name>TSOXD_CORS9</name>
<dbReference type="EC" id="1.5.3.24" evidence="4 8"/>
<dbReference type="EMBL" id="AB186138">
    <property type="protein sequence ID" value="BAD97817.1"/>
    <property type="molecule type" value="Genomic_DNA"/>
</dbReference>
<dbReference type="PDB" id="1VRQ">
    <property type="method" value="X-ray"/>
    <property type="resolution" value="2.20 A"/>
    <property type="chains" value="D=1-99"/>
</dbReference>
<dbReference type="PDB" id="1X31">
    <property type="method" value="X-ray"/>
    <property type="resolution" value="2.15 A"/>
    <property type="chains" value="D=1-99"/>
</dbReference>
<dbReference type="PDB" id="3AD7">
    <property type="method" value="X-ray"/>
    <property type="resolution" value="2.20 A"/>
    <property type="chains" value="D=1-99"/>
</dbReference>
<dbReference type="PDB" id="3AD8">
    <property type="method" value="X-ray"/>
    <property type="resolution" value="2.20 A"/>
    <property type="chains" value="D=1-99"/>
</dbReference>
<dbReference type="PDB" id="3AD9">
    <property type="method" value="X-ray"/>
    <property type="resolution" value="2.30 A"/>
    <property type="chains" value="D=1-99"/>
</dbReference>
<dbReference type="PDB" id="3ADA">
    <property type="method" value="X-ray"/>
    <property type="resolution" value="2.20 A"/>
    <property type="chains" value="D=1-99"/>
</dbReference>
<dbReference type="PDBsum" id="1VRQ"/>
<dbReference type="PDBsum" id="1X31"/>
<dbReference type="PDBsum" id="3AD7"/>
<dbReference type="PDBsum" id="3AD8"/>
<dbReference type="PDBsum" id="3AD9"/>
<dbReference type="PDBsum" id="3ADA"/>
<dbReference type="SMR" id="Q50LF1"/>
<dbReference type="BRENDA" id="1.5.3.1">
    <property type="organism ID" value="10044"/>
</dbReference>
<dbReference type="EvolutionaryTrace" id="Q50LF1"/>
<dbReference type="GO" id="GO:0005737">
    <property type="term" value="C:cytoplasm"/>
    <property type="evidence" value="ECO:0007669"/>
    <property type="project" value="UniProtKB-SubCell"/>
</dbReference>
<dbReference type="GO" id="GO:0046872">
    <property type="term" value="F:metal ion binding"/>
    <property type="evidence" value="ECO:0007669"/>
    <property type="project" value="UniProtKB-KW"/>
</dbReference>
<dbReference type="GO" id="GO:0008115">
    <property type="term" value="F:sarcosine oxidase activity"/>
    <property type="evidence" value="ECO:0007669"/>
    <property type="project" value="InterPro"/>
</dbReference>
<dbReference type="GO" id="GO:0046653">
    <property type="term" value="P:tetrahydrofolate metabolic process"/>
    <property type="evidence" value="ECO:0007669"/>
    <property type="project" value="InterPro"/>
</dbReference>
<dbReference type="Gene3D" id="3.30.2270.10">
    <property type="entry name" value="Folate-binding superfamily"/>
    <property type="match status" value="1"/>
</dbReference>
<dbReference type="InterPro" id="IPR006279">
    <property type="entry name" value="SoxD"/>
</dbReference>
<dbReference type="InterPro" id="IPR038561">
    <property type="entry name" value="SoxD_sf"/>
</dbReference>
<dbReference type="NCBIfam" id="TIGR01374">
    <property type="entry name" value="soxD"/>
    <property type="match status" value="1"/>
</dbReference>
<dbReference type="Pfam" id="PF04267">
    <property type="entry name" value="SoxD"/>
    <property type="match status" value="1"/>
</dbReference>
<gene>
    <name evidence="6" type="primary">soxD</name>
</gene>
<evidence type="ECO:0000269" key="1">
    <source>
    </source>
</evidence>
<evidence type="ECO:0000269" key="2">
    <source>
    </source>
</evidence>
<evidence type="ECO:0000269" key="3">
    <source>
    </source>
</evidence>
<evidence type="ECO:0000269" key="4">
    <source>
    </source>
</evidence>
<evidence type="ECO:0000269" key="5">
    <source>
    </source>
</evidence>
<evidence type="ECO:0000303" key="6">
    <source>
    </source>
</evidence>
<evidence type="ECO:0000305" key="7"/>
<evidence type="ECO:0000305" key="8">
    <source>
    </source>
</evidence>
<evidence type="ECO:0007744" key="9">
    <source>
        <dbReference type="PDB" id="1VRQ"/>
    </source>
</evidence>
<evidence type="ECO:0007744" key="10">
    <source>
        <dbReference type="PDB" id="1X31"/>
    </source>
</evidence>
<evidence type="ECO:0007744" key="11">
    <source>
        <dbReference type="PDB" id="3AD7"/>
    </source>
</evidence>
<evidence type="ECO:0007744" key="12">
    <source>
        <dbReference type="PDB" id="3AD8"/>
    </source>
</evidence>
<evidence type="ECO:0007744" key="13">
    <source>
        <dbReference type="PDB" id="3AD9"/>
    </source>
</evidence>
<evidence type="ECO:0007744" key="14">
    <source>
        <dbReference type="PDB" id="3ADA"/>
    </source>
</evidence>
<evidence type="ECO:0007829" key="15">
    <source>
        <dbReference type="PDB" id="1X31"/>
    </source>
</evidence>